<proteinExistence type="evidence at protein level"/>
<comment type="catalytic activity">
    <reaction evidence="1">
        <text>a carboxylic ester + H2O = an alcohol + a carboxylate + H(+)</text>
        <dbReference type="Rhea" id="RHEA:21164"/>
        <dbReference type="ChEBI" id="CHEBI:15377"/>
        <dbReference type="ChEBI" id="CHEBI:15378"/>
        <dbReference type="ChEBI" id="CHEBI:29067"/>
        <dbReference type="ChEBI" id="CHEBI:30879"/>
        <dbReference type="ChEBI" id="CHEBI:33308"/>
        <dbReference type="EC" id="3.1.1.1"/>
    </reaction>
</comment>
<comment type="similarity">
    <text evidence="3">Belongs to the type-B carboxylesterase/lipase family.</text>
</comment>
<protein>
    <recommendedName>
        <fullName>Esterase-5</fullName>
        <ecNumber>3.1.1.1</ecNumber>
    </recommendedName>
</protein>
<sequence length="38" mass="4008">SAAADPLIVELPNGKVRGRDNEGYYEAEGIPRAEPPVG</sequence>
<accession>P10095</accession>
<name>EST5_DROMO</name>
<feature type="chain" id="PRO_0000070275" description="Esterase-5">
    <location>
        <begin position="1"/>
        <end position="38" status="greater than"/>
    </location>
</feature>
<feature type="region of interest" description="Disordered" evidence="2">
    <location>
        <begin position="1"/>
        <end position="38"/>
    </location>
</feature>
<feature type="non-terminal residue">
    <location>
        <position position="38"/>
    </location>
</feature>
<evidence type="ECO:0000255" key="1">
    <source>
        <dbReference type="PROSITE-ProRule" id="PRU10039"/>
    </source>
</evidence>
<evidence type="ECO:0000256" key="2">
    <source>
        <dbReference type="SAM" id="MobiDB-lite"/>
    </source>
</evidence>
<evidence type="ECO:0000305" key="3"/>
<reference key="1">
    <citation type="journal article" date="1986" name="Biochem. J.">
        <title>Structural comparison of two esterases from Drosophila mojavensis isolated by immunoaffinity chromatography.</title>
        <authorList>
            <person name="Pen J."/>
            <person name="van Beeumen J."/>
            <person name="Beintema J.J."/>
        </authorList>
    </citation>
    <scope>PROTEIN SEQUENCE</scope>
</reference>
<keyword id="KW-0903">Direct protein sequencing</keyword>
<keyword id="KW-0378">Hydrolase</keyword>
<keyword id="KW-0719">Serine esterase</keyword>
<gene>
    <name type="primary">Est-5</name>
    <name type="synonym">Est5</name>
</gene>
<organism>
    <name type="scientific">Drosophila mojavensis</name>
    <name type="common">Fruit fly</name>
    <dbReference type="NCBI Taxonomy" id="7230"/>
    <lineage>
        <taxon>Eukaryota</taxon>
        <taxon>Metazoa</taxon>
        <taxon>Ecdysozoa</taxon>
        <taxon>Arthropoda</taxon>
        <taxon>Hexapoda</taxon>
        <taxon>Insecta</taxon>
        <taxon>Pterygota</taxon>
        <taxon>Neoptera</taxon>
        <taxon>Endopterygota</taxon>
        <taxon>Diptera</taxon>
        <taxon>Brachycera</taxon>
        <taxon>Muscomorpha</taxon>
        <taxon>Ephydroidea</taxon>
        <taxon>Drosophilidae</taxon>
        <taxon>Drosophila</taxon>
    </lineage>
</organism>
<dbReference type="EC" id="3.1.1.1"/>
<dbReference type="PIR" id="B29502">
    <property type="entry name" value="B29502"/>
</dbReference>
<dbReference type="SMR" id="P10095"/>
<dbReference type="GO" id="GO:0106435">
    <property type="term" value="F:carboxylesterase activity"/>
    <property type="evidence" value="ECO:0007669"/>
    <property type="project" value="UniProtKB-EC"/>
</dbReference>
<dbReference type="InterPro" id="IPR029058">
    <property type="entry name" value="AB_hydrolase_fold"/>
</dbReference>
<dbReference type="SUPFAM" id="SSF53474">
    <property type="entry name" value="alpha/beta-Hydrolases"/>
    <property type="match status" value="1"/>
</dbReference>